<accession>Q659A1</accession>
<accession>B2RU08</accession>
<accession>Q05CT1</accession>
<accession>Q3B7W6</accession>
<accession>Q63HP4</accession>
<accession>Q658Q0</accession>
<accession>Q68CN8</accession>
<accession>Q6IPW7</accession>
<accession>Q6UX23</accession>
<accession>Q71H65</accession>
<accession>Q96CY5</accession>
<accession>Q9HAA2</accession>
<reference key="1">
    <citation type="submission" date="2002-04" db="EMBL/GenBank/DDBJ databases">
        <title>Novel transcript in human breast cancer cells.</title>
        <authorList>
            <person name="Gokhale P.C."/>
            <person name="Dritschilo A."/>
            <person name="Rahman A."/>
            <person name="Ahmad I."/>
            <person name="Kasid U.N."/>
        </authorList>
    </citation>
    <scope>NUCLEOTIDE SEQUENCE [MRNA] (ISOFORM 1)</scope>
    <source>
        <tissue>Mammary cancer</tissue>
    </source>
</reference>
<reference key="2">
    <citation type="journal article" date="2003" name="Genome Res.">
        <title>The secreted protein discovery initiative (SPDI), a large-scale effort to identify novel human secreted and transmembrane proteins: a bioinformatics assessment.</title>
        <authorList>
            <person name="Clark H.F."/>
            <person name="Gurney A.L."/>
            <person name="Abaya E."/>
            <person name="Baker K."/>
            <person name="Baldwin D.T."/>
            <person name="Brush J."/>
            <person name="Chen J."/>
            <person name="Chow B."/>
            <person name="Chui C."/>
            <person name="Crowley C."/>
            <person name="Currell B."/>
            <person name="Deuel B."/>
            <person name="Dowd P."/>
            <person name="Eaton D."/>
            <person name="Foster J.S."/>
            <person name="Grimaldi C."/>
            <person name="Gu Q."/>
            <person name="Hass P.E."/>
            <person name="Heldens S."/>
            <person name="Huang A."/>
            <person name="Kim H.S."/>
            <person name="Klimowski L."/>
            <person name="Jin Y."/>
            <person name="Johnson S."/>
            <person name="Lee J."/>
            <person name="Lewis L."/>
            <person name="Liao D."/>
            <person name="Mark M.R."/>
            <person name="Robbie E."/>
            <person name="Sanchez C."/>
            <person name="Schoenfeld J."/>
            <person name="Seshagiri S."/>
            <person name="Simmons L."/>
            <person name="Singh J."/>
            <person name="Smith V."/>
            <person name="Stinson J."/>
            <person name="Vagts A."/>
            <person name="Vandlen R.L."/>
            <person name="Watanabe C."/>
            <person name="Wieand D."/>
            <person name="Woods K."/>
            <person name="Xie M.-H."/>
            <person name="Yansura D.G."/>
            <person name="Yi S."/>
            <person name="Yu G."/>
            <person name="Yuan J."/>
            <person name="Zhang M."/>
            <person name="Zhang Z."/>
            <person name="Goddard A.D."/>
            <person name="Wood W.I."/>
            <person name="Godowski P.J."/>
            <person name="Gray A.M."/>
        </authorList>
    </citation>
    <scope>NUCLEOTIDE SEQUENCE [LARGE SCALE MRNA] (ISOFORM 1)</scope>
</reference>
<reference key="3">
    <citation type="journal article" date="2004" name="Nat. Genet.">
        <title>Complete sequencing and characterization of 21,243 full-length human cDNAs.</title>
        <authorList>
            <person name="Ota T."/>
            <person name="Suzuki Y."/>
            <person name="Nishikawa T."/>
            <person name="Otsuki T."/>
            <person name="Sugiyama T."/>
            <person name="Irie R."/>
            <person name="Wakamatsu A."/>
            <person name="Hayashi K."/>
            <person name="Sato H."/>
            <person name="Nagai K."/>
            <person name="Kimura K."/>
            <person name="Makita H."/>
            <person name="Sekine M."/>
            <person name="Obayashi M."/>
            <person name="Nishi T."/>
            <person name="Shibahara T."/>
            <person name="Tanaka T."/>
            <person name="Ishii S."/>
            <person name="Yamamoto J."/>
            <person name="Saito K."/>
            <person name="Kawai Y."/>
            <person name="Isono Y."/>
            <person name="Nakamura Y."/>
            <person name="Nagahari K."/>
            <person name="Murakami K."/>
            <person name="Yasuda T."/>
            <person name="Iwayanagi T."/>
            <person name="Wagatsuma M."/>
            <person name="Shiratori A."/>
            <person name="Sudo H."/>
            <person name="Hosoiri T."/>
            <person name="Kaku Y."/>
            <person name="Kodaira H."/>
            <person name="Kondo H."/>
            <person name="Sugawara M."/>
            <person name="Takahashi M."/>
            <person name="Kanda K."/>
            <person name="Yokoi T."/>
            <person name="Furuya T."/>
            <person name="Kikkawa E."/>
            <person name="Omura Y."/>
            <person name="Abe K."/>
            <person name="Kamihara K."/>
            <person name="Katsuta N."/>
            <person name="Sato K."/>
            <person name="Tanikawa M."/>
            <person name="Yamazaki M."/>
            <person name="Ninomiya K."/>
            <person name="Ishibashi T."/>
            <person name="Yamashita H."/>
            <person name="Murakawa K."/>
            <person name="Fujimori K."/>
            <person name="Tanai H."/>
            <person name="Kimata M."/>
            <person name="Watanabe M."/>
            <person name="Hiraoka S."/>
            <person name="Chiba Y."/>
            <person name="Ishida S."/>
            <person name="Ono Y."/>
            <person name="Takiguchi S."/>
            <person name="Watanabe S."/>
            <person name="Yosida M."/>
            <person name="Hotuta T."/>
            <person name="Kusano J."/>
            <person name="Kanehori K."/>
            <person name="Takahashi-Fujii A."/>
            <person name="Hara H."/>
            <person name="Tanase T.-O."/>
            <person name="Nomura Y."/>
            <person name="Togiya S."/>
            <person name="Komai F."/>
            <person name="Hara R."/>
            <person name="Takeuchi K."/>
            <person name="Arita M."/>
            <person name="Imose N."/>
            <person name="Musashino K."/>
            <person name="Yuuki H."/>
            <person name="Oshima A."/>
            <person name="Sasaki N."/>
            <person name="Aotsuka S."/>
            <person name="Yoshikawa Y."/>
            <person name="Matsunawa H."/>
            <person name="Ichihara T."/>
            <person name="Shiohata N."/>
            <person name="Sano S."/>
            <person name="Moriya S."/>
            <person name="Momiyama H."/>
            <person name="Satoh N."/>
            <person name="Takami S."/>
            <person name="Terashima Y."/>
            <person name="Suzuki O."/>
            <person name="Nakagawa S."/>
            <person name="Senoh A."/>
            <person name="Mizoguchi H."/>
            <person name="Goto Y."/>
            <person name="Shimizu F."/>
            <person name="Wakebe H."/>
            <person name="Hishigaki H."/>
            <person name="Watanabe T."/>
            <person name="Sugiyama A."/>
            <person name="Takemoto M."/>
            <person name="Kawakami B."/>
            <person name="Yamazaki M."/>
            <person name="Watanabe K."/>
            <person name="Kumagai A."/>
            <person name="Itakura S."/>
            <person name="Fukuzumi Y."/>
            <person name="Fujimori Y."/>
            <person name="Komiyama M."/>
            <person name="Tashiro H."/>
            <person name="Tanigami A."/>
            <person name="Fujiwara T."/>
            <person name="Ono T."/>
            <person name="Yamada K."/>
            <person name="Fujii Y."/>
            <person name="Ozaki K."/>
            <person name="Hirao M."/>
            <person name="Ohmori Y."/>
            <person name="Kawabata A."/>
            <person name="Hikiji T."/>
            <person name="Kobatake N."/>
            <person name="Inagaki H."/>
            <person name="Ikema Y."/>
            <person name="Okamoto S."/>
            <person name="Okitani R."/>
            <person name="Kawakami T."/>
            <person name="Noguchi S."/>
            <person name="Itoh T."/>
            <person name="Shigeta K."/>
            <person name="Senba T."/>
            <person name="Matsumura K."/>
            <person name="Nakajima Y."/>
            <person name="Mizuno T."/>
            <person name="Morinaga M."/>
            <person name="Sasaki M."/>
            <person name="Togashi T."/>
            <person name="Oyama M."/>
            <person name="Hata H."/>
            <person name="Watanabe M."/>
            <person name="Komatsu T."/>
            <person name="Mizushima-Sugano J."/>
            <person name="Satoh T."/>
            <person name="Shirai Y."/>
            <person name="Takahashi Y."/>
            <person name="Nakagawa K."/>
            <person name="Okumura K."/>
            <person name="Nagase T."/>
            <person name="Nomura N."/>
            <person name="Kikuchi H."/>
            <person name="Masuho Y."/>
            <person name="Yamashita R."/>
            <person name="Nakai K."/>
            <person name="Yada T."/>
            <person name="Nakamura Y."/>
            <person name="Ohara O."/>
            <person name="Isogai T."/>
            <person name="Sugano S."/>
        </authorList>
    </citation>
    <scope>NUCLEOTIDE SEQUENCE [LARGE SCALE MRNA] (ISOFORM 1)</scope>
    <source>
        <tissue>Embryo</tissue>
        <tissue>Kidney</tissue>
    </source>
</reference>
<reference key="4">
    <citation type="journal article" date="2007" name="BMC Genomics">
        <title>The full-ORF clone resource of the German cDNA consortium.</title>
        <authorList>
            <person name="Bechtel S."/>
            <person name="Rosenfelder H."/>
            <person name="Duda A."/>
            <person name="Schmidt C.P."/>
            <person name="Ernst U."/>
            <person name="Wellenreuther R."/>
            <person name="Mehrle A."/>
            <person name="Schuster C."/>
            <person name="Bahr A."/>
            <person name="Bloecker H."/>
            <person name="Heubner D."/>
            <person name="Hoerlein A."/>
            <person name="Michel G."/>
            <person name="Wedler H."/>
            <person name="Koehrer K."/>
            <person name="Ottenwaelder B."/>
            <person name="Poustka A."/>
            <person name="Wiemann S."/>
            <person name="Schupp I."/>
        </authorList>
    </citation>
    <scope>NUCLEOTIDE SEQUENCE [LARGE SCALE MRNA] (ISOFORMS 1 AND 2)</scope>
    <source>
        <tissue>Adipose tissue</tissue>
        <tissue>Bone marrow</tissue>
        <tissue>Fetal kidney</tissue>
        <tissue>Heart</tissue>
    </source>
</reference>
<reference key="5">
    <citation type="submission" date="2005-09" db="EMBL/GenBank/DDBJ databases">
        <authorList>
            <person name="Mural R.J."/>
            <person name="Istrail S."/>
            <person name="Sutton G.G."/>
            <person name="Florea L."/>
            <person name="Halpern A.L."/>
            <person name="Mobarry C.M."/>
            <person name="Lippert R."/>
            <person name="Walenz B."/>
            <person name="Shatkay H."/>
            <person name="Dew I."/>
            <person name="Miller J.R."/>
            <person name="Flanigan M.J."/>
            <person name="Edwards N.J."/>
            <person name="Bolanos R."/>
            <person name="Fasulo D."/>
            <person name="Halldorsson B.V."/>
            <person name="Hannenhalli S."/>
            <person name="Turner R."/>
            <person name="Yooseph S."/>
            <person name="Lu F."/>
            <person name="Nusskern D.R."/>
            <person name="Shue B.C."/>
            <person name="Zheng X.H."/>
            <person name="Zhong F."/>
            <person name="Delcher A.L."/>
            <person name="Huson D.H."/>
            <person name="Kravitz S.A."/>
            <person name="Mouchard L."/>
            <person name="Reinert K."/>
            <person name="Remington K.A."/>
            <person name="Clark A.G."/>
            <person name="Waterman M.S."/>
            <person name="Eichler E.E."/>
            <person name="Adams M.D."/>
            <person name="Hunkapiller M.W."/>
            <person name="Myers E.W."/>
            <person name="Venter J.C."/>
        </authorList>
    </citation>
    <scope>NUCLEOTIDE SEQUENCE [LARGE SCALE GENOMIC DNA]</scope>
</reference>
<reference key="6">
    <citation type="journal article" date="2004" name="Genome Res.">
        <title>The status, quality, and expansion of the NIH full-length cDNA project: the Mammalian Gene Collection (MGC).</title>
        <authorList>
            <consortium name="The MGC Project Team"/>
        </authorList>
    </citation>
    <scope>NUCLEOTIDE SEQUENCE [LARGE SCALE MRNA] (ISOFORM 1)</scope>
    <source>
        <tissue>Bone</tissue>
        <tissue>Brain</tissue>
        <tissue>Ovary</tissue>
        <tissue>Testis</tissue>
    </source>
</reference>
<reference key="7">
    <citation type="journal article" date="2004" name="Eur. J. Biochem.">
        <title>NARG2 encodes a novel nuclear protein with (S/T)PXX motifs that is expressed during development.</title>
        <authorList>
            <person name="Sugiura N."/>
            <person name="Dadashev V."/>
            <person name="Corriveau R.A."/>
        </authorList>
    </citation>
    <scope>IDENTIFICATION</scope>
    <scope>TISSUE SPECIFICITY</scope>
    <scope>DEVELOPMENTAL STAGE</scope>
</reference>
<reference key="8">
    <citation type="journal article" date="2008" name="Proc. Natl. Acad. Sci. U.S.A.">
        <title>A quantitative atlas of mitotic phosphorylation.</title>
        <authorList>
            <person name="Dephoure N."/>
            <person name="Zhou C."/>
            <person name="Villen J."/>
            <person name="Beausoleil S.A."/>
            <person name="Bakalarski C.E."/>
            <person name="Elledge S.J."/>
            <person name="Gygi S.P."/>
        </authorList>
    </citation>
    <scope>IDENTIFICATION BY MASS SPECTROMETRY [LARGE SCALE ANALYSIS]</scope>
    <source>
        <tissue>Cervix carcinoma</tissue>
    </source>
</reference>
<reference key="9">
    <citation type="journal article" date="2009" name="Sci. Signal.">
        <title>Quantitative phosphoproteomic analysis of T cell receptor signaling reveals system-wide modulation of protein-protein interactions.</title>
        <authorList>
            <person name="Mayya V."/>
            <person name="Lundgren D.H."/>
            <person name="Hwang S.-I."/>
            <person name="Rezaul K."/>
            <person name="Wu L."/>
            <person name="Eng J.K."/>
            <person name="Rodionov V."/>
            <person name="Han D.K."/>
        </authorList>
    </citation>
    <scope>IDENTIFICATION BY MASS SPECTROMETRY [LARGE SCALE ANALYSIS]</scope>
    <source>
        <tissue>Leukemic T-cell</tissue>
    </source>
</reference>
<reference key="10">
    <citation type="journal article" date="2011" name="BMC Syst. Biol.">
        <title>Initial characterization of the human central proteome.</title>
        <authorList>
            <person name="Burkard T.R."/>
            <person name="Planyavsky M."/>
            <person name="Kaupe I."/>
            <person name="Breitwieser F.P."/>
            <person name="Buerckstuemmer T."/>
            <person name="Bennett K.L."/>
            <person name="Superti-Furga G."/>
            <person name="Colinge J."/>
        </authorList>
    </citation>
    <scope>IDENTIFICATION BY MASS SPECTROMETRY [LARGE SCALE ANALYSIS]</scope>
</reference>
<reference key="11">
    <citation type="journal article" date="2011" name="Mol. Cell">
        <title>The little elongation complex regulates small nuclear RNA transcription.</title>
        <authorList>
            <person name="Smith E.R."/>
            <person name="Lin C."/>
            <person name="Garrett A.S."/>
            <person name="Thornton J."/>
            <person name="Mohaghegh N."/>
            <person name="Hu D."/>
            <person name="Jackson J."/>
            <person name="Saraf A."/>
            <person name="Swanson S.K."/>
            <person name="Seidel C."/>
            <person name="Florens L."/>
            <person name="Washburn M.P."/>
            <person name="Eissenberg J.C."/>
            <person name="Shilatifard A."/>
        </authorList>
    </citation>
    <scope>IDENTIFICATION IN THE LEC COMPLEX</scope>
    <scope>INTERACTION WITH ELL</scope>
</reference>
<reference key="12">
    <citation type="journal article" date="2013" name="J. Proteome Res.">
        <title>Toward a comprehensive characterization of a human cancer cell phosphoproteome.</title>
        <authorList>
            <person name="Zhou H."/>
            <person name="Di Palma S."/>
            <person name="Preisinger C."/>
            <person name="Peng M."/>
            <person name="Polat A.N."/>
            <person name="Heck A.J."/>
            <person name="Mohammed S."/>
        </authorList>
    </citation>
    <scope>PHOSPHORYLATION [LARGE SCALE ANALYSIS] AT SER-17 AND SER-326</scope>
    <scope>IDENTIFICATION BY MASS SPECTROMETRY [LARGE SCALE ANALYSIS]</scope>
    <source>
        <tissue>Cervix carcinoma</tissue>
        <tissue>Erythroleukemia</tissue>
    </source>
</reference>
<reference key="13">
    <citation type="journal article" date="2013" name="Mol. Cell">
        <title>The little elongation complex functions at initiation and elongation phases of snRNA gene transcription.</title>
        <authorList>
            <person name="Hu D."/>
            <person name="Smith E.R."/>
            <person name="Garruss A.S."/>
            <person name="Mohaghegh N."/>
            <person name="Varberg J.M."/>
            <person name="Lin C."/>
            <person name="Jackson J."/>
            <person name="Gao X."/>
            <person name="Saraf A."/>
            <person name="Florens L."/>
            <person name="Washburn M.P."/>
            <person name="Eissenberg J.C."/>
            <person name="Shilatifard A."/>
        </authorList>
    </citation>
    <scope>FUNCTION</scope>
    <scope>SUBCELLULAR LOCATION</scope>
    <scope>IDENTIFICATION IN THE LEC COMPLEX</scope>
    <scope>INTERACTION WITH ICE1</scope>
</reference>
<reference key="14">
    <citation type="journal article" date="2014" name="J. Proteomics">
        <title>An enzyme assisted RP-RPLC approach for in-depth analysis of human liver phosphoproteome.</title>
        <authorList>
            <person name="Bian Y."/>
            <person name="Song C."/>
            <person name="Cheng K."/>
            <person name="Dong M."/>
            <person name="Wang F."/>
            <person name="Huang J."/>
            <person name="Sun D."/>
            <person name="Wang L."/>
            <person name="Ye M."/>
            <person name="Zou H."/>
        </authorList>
    </citation>
    <scope>IDENTIFICATION BY MASS SPECTROMETRY [LARGE SCALE ANALYSIS]</scope>
    <source>
        <tissue>Liver</tissue>
    </source>
</reference>
<dbReference type="EMBL" id="AF502591">
    <property type="protein sequence ID" value="AAQ07460.1"/>
    <property type="molecule type" value="mRNA"/>
</dbReference>
<dbReference type="EMBL" id="AY358546">
    <property type="protein sequence ID" value="AAQ88910.1"/>
    <property type="status" value="ALT_SEQ"/>
    <property type="molecule type" value="mRNA"/>
</dbReference>
<dbReference type="EMBL" id="CR749852">
    <property type="protein sequence ID" value="CAH18700.1"/>
    <property type="status" value="ALT_SEQ"/>
    <property type="molecule type" value="mRNA"/>
</dbReference>
<dbReference type="EMBL" id="BX647873">
    <property type="protein sequence ID" value="CAH56197.1"/>
    <property type="molecule type" value="mRNA"/>
</dbReference>
<dbReference type="EMBL" id="AK021958">
    <property type="protein sequence ID" value="BAB13948.1"/>
    <property type="status" value="ALT_INIT"/>
    <property type="molecule type" value="mRNA"/>
</dbReference>
<dbReference type="EMBL" id="AK055752">
    <property type="protein sequence ID" value="BAG51567.1"/>
    <property type="molecule type" value="mRNA"/>
</dbReference>
<dbReference type="EMBL" id="AL833122">
    <property type="protein sequence ID" value="CAH56202.1"/>
    <property type="molecule type" value="mRNA"/>
</dbReference>
<dbReference type="EMBL" id="AL832046">
    <property type="protein sequence ID" value="CAH56220.1"/>
    <property type="molecule type" value="mRNA"/>
</dbReference>
<dbReference type="EMBL" id="CH471082">
    <property type="protein sequence ID" value="EAW77589.1"/>
    <property type="molecule type" value="Genomic_DNA"/>
</dbReference>
<dbReference type="EMBL" id="BC013684">
    <property type="protein sequence ID" value="AAH13684.1"/>
    <property type="status" value="ALT_INIT"/>
    <property type="molecule type" value="mRNA"/>
</dbReference>
<dbReference type="EMBL" id="BC020918">
    <property type="protein sequence ID" value="AAH20918.1"/>
    <property type="status" value="ALT_SEQ"/>
    <property type="molecule type" value="mRNA"/>
</dbReference>
<dbReference type="EMBL" id="BC071685">
    <property type="protein sequence ID" value="AAH71685.1"/>
    <property type="molecule type" value="mRNA"/>
</dbReference>
<dbReference type="EMBL" id="BC107427">
    <property type="protein sequence ID" value="AAI07428.1"/>
    <property type="status" value="ALT_SEQ"/>
    <property type="molecule type" value="mRNA"/>
</dbReference>
<dbReference type="EMBL" id="BC140894">
    <property type="protein sequence ID" value="AAI40895.1"/>
    <property type="molecule type" value="mRNA"/>
</dbReference>
<dbReference type="CCDS" id="CCDS10176.1">
    <molecule id="Q659A1-1"/>
</dbReference>
<dbReference type="RefSeq" id="NP_001018099.1">
    <property type="nucleotide sequence ID" value="NM_001018089.2"/>
</dbReference>
<dbReference type="RefSeq" id="NP_078887.2">
    <molecule id="Q659A1-1"/>
    <property type="nucleotide sequence ID" value="NM_024611.5"/>
</dbReference>
<dbReference type="RefSeq" id="XP_005254718.1">
    <property type="nucleotide sequence ID" value="XM_005254661.1"/>
</dbReference>
<dbReference type="RefSeq" id="XP_011520311.1">
    <molecule id="Q659A1-1"/>
    <property type="nucleotide sequence ID" value="XM_011522009.3"/>
</dbReference>
<dbReference type="RefSeq" id="XP_016878058.1">
    <molecule id="Q659A1-1"/>
    <property type="nucleotide sequence ID" value="XM_017022569.3"/>
</dbReference>
<dbReference type="RefSeq" id="XP_054234748.1">
    <molecule id="Q659A1-1"/>
    <property type="nucleotide sequence ID" value="XM_054378773.1"/>
</dbReference>
<dbReference type="RefSeq" id="XP_054234749.1">
    <molecule id="Q659A1-1"/>
    <property type="nucleotide sequence ID" value="XM_054378774.1"/>
</dbReference>
<dbReference type="RefSeq" id="XP_054234750.1">
    <molecule id="Q659A1-1"/>
    <property type="nucleotide sequence ID" value="XM_054378775.1"/>
</dbReference>
<dbReference type="BioGRID" id="122789">
    <property type="interactions" value="84"/>
</dbReference>
<dbReference type="ComplexPortal" id="CPX-2712">
    <property type="entry name" value="Little elongation complex, ELL variant"/>
</dbReference>
<dbReference type="ComplexPortal" id="CPX-2713">
    <property type="entry name" value="Little elongation complex, ELL2 variant"/>
</dbReference>
<dbReference type="ComplexPortal" id="CPX-2714">
    <property type="entry name" value="Little elongation complex, ELL3 variant"/>
</dbReference>
<dbReference type="CORUM" id="Q659A1"/>
<dbReference type="FunCoup" id="Q659A1">
    <property type="interactions" value="4758"/>
</dbReference>
<dbReference type="IntAct" id="Q659A1">
    <property type="interactions" value="62"/>
</dbReference>
<dbReference type="STRING" id="9606.ENSP00000261520"/>
<dbReference type="GlyGen" id="Q659A1">
    <property type="glycosylation" value="1 site, 1 O-linked glycan (1 site)"/>
</dbReference>
<dbReference type="iPTMnet" id="Q659A1"/>
<dbReference type="PhosphoSitePlus" id="Q659A1"/>
<dbReference type="BioMuta" id="ICE2"/>
<dbReference type="DMDM" id="156632596"/>
<dbReference type="jPOST" id="Q659A1"/>
<dbReference type="MassIVE" id="Q659A1"/>
<dbReference type="PaxDb" id="9606-ENSP00000261520"/>
<dbReference type="PeptideAtlas" id="Q659A1"/>
<dbReference type="ProteomicsDB" id="65932">
    <molecule id="Q659A1-1"/>
</dbReference>
<dbReference type="ProteomicsDB" id="65933">
    <molecule id="Q659A1-2"/>
</dbReference>
<dbReference type="Pumba" id="Q659A1"/>
<dbReference type="Antibodypedia" id="25471">
    <property type="antibodies" value="114 antibodies from 19 providers"/>
</dbReference>
<dbReference type="DNASU" id="79664"/>
<dbReference type="Ensembl" id="ENST00000261520.9">
    <molecule id="Q659A1-1"/>
    <property type="protein sequence ID" value="ENSP00000261520.4"/>
    <property type="gene ID" value="ENSG00000128915.12"/>
</dbReference>
<dbReference type="Ensembl" id="ENST00000558181.5">
    <molecule id="Q659A1-2"/>
    <property type="protein sequence ID" value="ENSP00000453593.1"/>
    <property type="gene ID" value="ENSG00000128915.12"/>
</dbReference>
<dbReference type="Ensembl" id="ENST00000560668.5">
    <molecule id="Q659A1-2"/>
    <property type="protein sequence ID" value="ENSP00000453303.1"/>
    <property type="gene ID" value="ENSG00000128915.12"/>
</dbReference>
<dbReference type="GeneID" id="79664"/>
<dbReference type="KEGG" id="hsa:79664"/>
<dbReference type="MANE-Select" id="ENST00000261520.9">
    <property type="protein sequence ID" value="ENSP00000261520.4"/>
    <property type="RefSeq nucleotide sequence ID" value="NM_024611.6"/>
    <property type="RefSeq protein sequence ID" value="NP_078887.2"/>
</dbReference>
<dbReference type="UCSC" id="uc002agp.5">
    <molecule id="Q659A1-1"/>
    <property type="organism name" value="human"/>
</dbReference>
<dbReference type="AGR" id="HGNC:29885"/>
<dbReference type="CTD" id="79664"/>
<dbReference type="DisGeNET" id="79664"/>
<dbReference type="GeneCards" id="ICE2"/>
<dbReference type="HGNC" id="HGNC:29885">
    <property type="gene designation" value="ICE2"/>
</dbReference>
<dbReference type="HPA" id="ENSG00000128915">
    <property type="expression patterns" value="Tissue enhanced (parathyroid)"/>
</dbReference>
<dbReference type="MalaCards" id="ICE2"/>
<dbReference type="MIM" id="610835">
    <property type="type" value="gene"/>
</dbReference>
<dbReference type="neXtProt" id="NX_Q659A1"/>
<dbReference type="OpenTargets" id="ENSG00000128915"/>
<dbReference type="PharmGKB" id="PA134960292"/>
<dbReference type="VEuPathDB" id="HostDB:ENSG00000128915"/>
<dbReference type="eggNOG" id="ENOG502QUWA">
    <property type="taxonomic scope" value="Eukaryota"/>
</dbReference>
<dbReference type="GeneTree" id="ENSGT00390000006883"/>
<dbReference type="HOGENOM" id="CLU_327237_0_0_1"/>
<dbReference type="InParanoid" id="Q659A1"/>
<dbReference type="OMA" id="LPFHQQH"/>
<dbReference type="OrthoDB" id="6288737at2759"/>
<dbReference type="PAN-GO" id="Q659A1">
    <property type="GO annotations" value="3 GO annotations based on evolutionary models"/>
</dbReference>
<dbReference type="PhylomeDB" id="Q659A1"/>
<dbReference type="TreeFam" id="TF106272"/>
<dbReference type="PathwayCommons" id="Q659A1"/>
<dbReference type="Reactome" id="R-HSA-6807505">
    <property type="pathway name" value="RNA polymerase II transcribes snRNA genes"/>
</dbReference>
<dbReference type="SignaLink" id="Q659A1"/>
<dbReference type="SIGNOR" id="Q659A1"/>
<dbReference type="BioGRID-ORCS" id="79664">
    <property type="hits" value="358 hits in 1156 CRISPR screens"/>
</dbReference>
<dbReference type="ChiTaRS" id="ICE2">
    <property type="organism name" value="human"/>
</dbReference>
<dbReference type="GenomeRNAi" id="79664"/>
<dbReference type="Pharos" id="Q659A1">
    <property type="development level" value="Tbio"/>
</dbReference>
<dbReference type="PRO" id="PR:Q659A1"/>
<dbReference type="Proteomes" id="UP000005640">
    <property type="component" value="Chromosome 15"/>
</dbReference>
<dbReference type="RNAct" id="Q659A1">
    <property type="molecule type" value="protein"/>
</dbReference>
<dbReference type="Bgee" id="ENSG00000128915">
    <property type="expression patterns" value="Expressed in colonic epithelium and 189 other cell types or tissues"/>
</dbReference>
<dbReference type="ExpressionAtlas" id="Q659A1">
    <property type="expression patterns" value="baseline and differential"/>
</dbReference>
<dbReference type="GO" id="GO:0015030">
    <property type="term" value="C:Cajal body"/>
    <property type="evidence" value="ECO:0000314"/>
    <property type="project" value="UniProtKB"/>
</dbReference>
<dbReference type="GO" id="GO:0005829">
    <property type="term" value="C:cytosol"/>
    <property type="evidence" value="ECO:0000314"/>
    <property type="project" value="HPA"/>
</dbReference>
<dbReference type="GO" id="GO:0000791">
    <property type="term" value="C:euchromatin"/>
    <property type="evidence" value="ECO:0000314"/>
    <property type="project" value="UniProtKB"/>
</dbReference>
<dbReference type="GO" id="GO:0035363">
    <property type="term" value="C:histone locus body"/>
    <property type="evidence" value="ECO:0000314"/>
    <property type="project" value="UniProtKB"/>
</dbReference>
<dbReference type="GO" id="GO:0016604">
    <property type="term" value="C:nuclear body"/>
    <property type="evidence" value="ECO:0000314"/>
    <property type="project" value="HPA"/>
</dbReference>
<dbReference type="GO" id="GO:0005654">
    <property type="term" value="C:nucleoplasm"/>
    <property type="evidence" value="ECO:0000314"/>
    <property type="project" value="HPA"/>
</dbReference>
<dbReference type="GO" id="GO:0008023">
    <property type="term" value="C:transcription elongation factor complex"/>
    <property type="evidence" value="ECO:0000314"/>
    <property type="project" value="UniProtKB"/>
</dbReference>
<dbReference type="GO" id="GO:0045945">
    <property type="term" value="P:positive regulation of transcription by RNA polymerase III"/>
    <property type="evidence" value="ECO:0000315"/>
    <property type="project" value="UniProtKB"/>
</dbReference>
<dbReference type="GO" id="GO:0042795">
    <property type="term" value="P:snRNA transcription by RNA polymerase II"/>
    <property type="evidence" value="ECO:0000315"/>
    <property type="project" value="UniProtKB"/>
</dbReference>
<dbReference type="GO" id="GO:0042796">
    <property type="term" value="P:snRNA transcription by RNA polymerase III"/>
    <property type="evidence" value="ECO:0000315"/>
    <property type="project" value="UniProtKB"/>
</dbReference>
<dbReference type="InterPro" id="IPR019535">
    <property type="entry name" value="ICE2_C"/>
</dbReference>
<dbReference type="PANTHER" id="PTHR14633">
    <property type="entry name" value="LITTLE ELONGATION COMPLEX SUBUNIT 2"/>
    <property type="match status" value="1"/>
</dbReference>
<dbReference type="PANTHER" id="PTHR14633:SF3">
    <property type="entry name" value="LITTLE ELONGATION COMPLEX SUBUNIT 2"/>
    <property type="match status" value="1"/>
</dbReference>
<dbReference type="Pfam" id="PF10505">
    <property type="entry name" value="NARG2_C"/>
    <property type="match status" value="1"/>
</dbReference>
<gene>
    <name type="primary">ICE2</name>
    <name type="synonym">BRCC1</name>
    <name type="synonym">NARG2</name>
    <name type="ORF">UNQ3101/PRO10100</name>
</gene>
<protein>
    <recommendedName>
        <fullName>Little elongation complex subunit 2</fullName>
    </recommendedName>
    <alternativeName>
        <fullName>Interactor of little elongator complex ELL subunit 2</fullName>
    </alternativeName>
    <alternativeName>
        <fullName>NMDA receptor-regulated protein 2</fullName>
    </alternativeName>
</protein>
<comment type="function">
    <text evidence="5">Component of the little elongation complex (LEC), a complex required to regulate small nuclear RNA (snRNA) gene transcription by RNA polymerase II and III.</text>
</comment>
<comment type="subunit">
    <text evidence="4 5">Component of the little elongation complex (LEC), at least composed of ELL (ELL, ELL2 or ELL3), ZC3H8, ICE1 and ICE2. Interacts with ICE1 (via C-terminus domain). Interacts with ELL.</text>
</comment>
<comment type="interaction">
    <interactant intactId="EBI-4322746">
        <id>Q659A1</id>
    </interactant>
    <interactant intactId="EBI-1245868">
        <id>P55199</id>
        <label>ELL</label>
    </interactant>
    <organismsDiffer>false</organismsDiffer>
    <experiments>5</experiments>
</comment>
<comment type="subcellular location">
    <subcellularLocation>
        <location evidence="5">Nucleus</location>
    </subcellularLocation>
    <text>Colocalizes with COIL in subnuclear Cajal and histone locus bodies. Translocates in the LEC complex to Cajal and histone locus bodies at snRNA genes in a ICE1-dependent manner. Associates to transcriptionally active chromatin at snRNA genes.</text>
</comment>
<comment type="alternative products">
    <event type="alternative splicing"/>
    <isoform>
        <id>Q659A1-1</id>
        <name>1</name>
        <sequence type="displayed"/>
    </isoform>
    <isoform>
        <id>Q659A1-2</id>
        <name>2</name>
        <sequence type="described" ref="VSP_041612 VSP_041613"/>
    </isoform>
</comment>
<comment type="tissue specificity">
    <text evidence="3">Expressed at low levels in lung and testis.</text>
</comment>
<comment type="developmental stage">
    <text evidence="3">Expressed in fetal brain, kidney, liver and lung.</text>
</comment>
<comment type="miscellaneous">
    <molecule>Isoform 2</molecule>
    <text evidence="7">May be produced at very low levels due to a premature stop codon in the mRNA, leading to nonsense-mediated mRNA decay.</text>
</comment>
<comment type="similarity">
    <text evidence="7">Belongs to the ICE2 family.</text>
</comment>
<comment type="sequence caution" evidence="7">
    <conflict type="erroneous initiation">
        <sequence resource="EMBL-CDS" id="AAH13684"/>
    </conflict>
    <text>Truncated N-terminus.</text>
</comment>
<comment type="sequence caution" evidence="7">
    <conflict type="miscellaneous discrepancy">
        <sequence resource="EMBL-CDS" id="AAH20918"/>
    </conflict>
    <text>Contaminating sequence. Potential poly-A sequence.</text>
</comment>
<comment type="sequence caution" evidence="7">
    <conflict type="miscellaneous discrepancy">
        <sequence resource="EMBL-CDS" id="AAI07428"/>
    </conflict>
    <text>Probable cloning artifact.</text>
</comment>
<comment type="sequence caution" evidence="7">
    <conflict type="miscellaneous discrepancy">
        <sequence resource="EMBL-CDS" id="AAQ88910"/>
    </conflict>
    <text>Unlikely isoform. Aberrant splice sites.</text>
</comment>
<comment type="sequence caution" evidence="7">
    <conflict type="erroneous initiation">
        <sequence resource="EMBL-CDS" id="BAB13948"/>
    </conflict>
    <text>Truncated N-terminus.</text>
</comment>
<comment type="sequence caution" evidence="7">
    <conflict type="erroneous translation">
        <sequence resource="EMBL-CDS" id="CAH18700"/>
    </conflict>
    <text>Wrong choice of CDS.</text>
</comment>
<sequence length="982" mass="110011">MSSKMVISEPGLNWDISPKNGLKTFFSRENYKDHSMAPSLKELRVLSNRRIGENLNASASSVENEPAVSSATQAKEKVKTTIGMVLLPKPRVPYPRFSRFSQREQRSYVDLLVKYAKIPANSKAVGINKNDYLQYLDMKKHVNEEVTEFLKFLQNSAKKCAQDYNMLSDDARLFTEKILRACIEQVKKYSEFYTLHEVTSLMGFFPFRVEMGLKLEKTLLALGSVKYVKTVFPSMPIKLQLSKDDIATIETSEQTAEAMHYDISKDPNAEKLVSRYHPQIALTSQSLFTLLNNHGPTYKEQWEIPVCIQVIPVAGSKPVKVIYINSPLPQKKMTMRERNQIFHEVPLKFMMSKNTSVPVSAVFMDKPEEFISEMDMSCEVNECRKIESLENLYLDFDDDVTELETFGVTTTKVSKSPSPASTSTVPNMTDAPTAPKAGTTTVAPSAPDISANSRSLSQILMEQLQKEKQLVTGMDGGPEECKNKDDQGFESCEKVSNSDKPLIQDSDLKTSDALQLENSQEIETSNKNDMTIDILHADGERPNVLENLDNSKEKTVGSEAAKTEDTVLCSSDTDEECLIIDTECKNNSDGKTAVVGSNLSSRPASPNSSSGQASVGNQTNTACSPEESCVLKKPIKRVYKKFDPVGEILKMQDELLKPISRKVPELPLMNLENSKQPSVSEQLSGPSDSSSWPKSGWPSAFQKPKGRLPYELQDYVEDTSEYLAPQEGNFVYKLFSLQDLLLLVRCSVQRIETRPRSKKRKKIRRQFPVYVLPKVEYQACYGVEALTESELCRLWTESLLHSNSSFYVGHIDAFTSKLFLLEEITSEELKEKLSALKISNLFNILQHILKKLSSLQEGSYLLSHAAEDSSLLIYKASDGKVTRTAYNLYKTHCGLPGVPSSLSVPWVPLDPSLLLPYHIHHGRIPCTFPPKSLDTTTQQKIGGTRMPTRSHRNPVSMETKSSCLPAQQVETEGVAPHKRKIT</sequence>
<name>ICE2_HUMAN</name>
<organism>
    <name type="scientific">Homo sapiens</name>
    <name type="common">Human</name>
    <dbReference type="NCBI Taxonomy" id="9606"/>
    <lineage>
        <taxon>Eukaryota</taxon>
        <taxon>Metazoa</taxon>
        <taxon>Chordata</taxon>
        <taxon>Craniata</taxon>
        <taxon>Vertebrata</taxon>
        <taxon>Euteleostomi</taxon>
        <taxon>Mammalia</taxon>
        <taxon>Eutheria</taxon>
        <taxon>Euarchontoglires</taxon>
        <taxon>Primates</taxon>
        <taxon>Haplorrhini</taxon>
        <taxon>Catarrhini</taxon>
        <taxon>Hominidae</taxon>
        <taxon>Homo</taxon>
    </lineage>
</organism>
<keyword id="KW-0025">Alternative splicing</keyword>
<keyword id="KW-0539">Nucleus</keyword>
<keyword id="KW-0597">Phosphoprotein</keyword>
<keyword id="KW-1267">Proteomics identification</keyword>
<keyword id="KW-1185">Reference proteome</keyword>
<keyword id="KW-0804">Transcription</keyword>
<keyword id="KW-0805">Transcription regulation</keyword>
<feature type="chain" id="PRO_0000297964" description="Little elongation complex subunit 2">
    <location>
        <begin position="1"/>
        <end position="982"/>
    </location>
</feature>
<feature type="region of interest" description="Disordered" evidence="2">
    <location>
        <begin position="410"/>
        <end position="450"/>
    </location>
</feature>
<feature type="region of interest" description="Disordered" evidence="2">
    <location>
        <begin position="473"/>
        <end position="504"/>
    </location>
</feature>
<feature type="region of interest" description="Disordered" evidence="2">
    <location>
        <begin position="595"/>
        <end position="623"/>
    </location>
</feature>
<feature type="region of interest" description="Disordered" evidence="2">
    <location>
        <begin position="672"/>
        <end position="697"/>
    </location>
</feature>
<feature type="region of interest" description="Disordered" evidence="2">
    <location>
        <begin position="930"/>
        <end position="982"/>
    </location>
</feature>
<feature type="compositionally biased region" description="Polar residues" evidence="2">
    <location>
        <begin position="410"/>
        <end position="427"/>
    </location>
</feature>
<feature type="compositionally biased region" description="Basic and acidic residues" evidence="2">
    <location>
        <begin position="479"/>
        <end position="497"/>
    </location>
</feature>
<feature type="compositionally biased region" description="Low complexity" evidence="2">
    <location>
        <begin position="597"/>
        <end position="610"/>
    </location>
</feature>
<feature type="compositionally biased region" description="Polar residues" evidence="2">
    <location>
        <begin position="611"/>
        <end position="623"/>
    </location>
</feature>
<feature type="compositionally biased region" description="Polar residues" evidence="2">
    <location>
        <begin position="672"/>
        <end position="683"/>
    </location>
</feature>
<feature type="compositionally biased region" description="Low complexity" evidence="2">
    <location>
        <begin position="684"/>
        <end position="697"/>
    </location>
</feature>
<feature type="compositionally biased region" description="Polar residues" evidence="2">
    <location>
        <begin position="956"/>
        <end position="970"/>
    </location>
</feature>
<feature type="modified residue" description="Phosphoserine" evidence="8">
    <location>
        <position position="17"/>
    </location>
</feature>
<feature type="modified residue" description="Phosphoserine" evidence="8">
    <location>
        <position position="326"/>
    </location>
</feature>
<feature type="modified residue" description="Phosphoserine" evidence="1">
    <location>
        <position position="571"/>
    </location>
</feature>
<feature type="modified residue" description="Phosphothreonine" evidence="1">
    <location>
        <position position="573"/>
    </location>
</feature>
<feature type="splice variant" id="VSP_041612" description="In isoform 2." evidence="6">
    <original>RIGENLNASASSVENEPAVSSATQ</original>
    <variation>ESRGVMWTCWLNTQRFLQIPKLLE</variation>
    <location>
        <begin position="50"/>
        <end position="73"/>
    </location>
</feature>
<feature type="splice variant" id="VSP_041613" description="In isoform 2." evidence="6">
    <location>
        <begin position="74"/>
        <end position="982"/>
    </location>
</feature>
<feature type="sequence conflict" description="In Ref. 4; CAH18700." evidence="7" ref="4">
    <original>L</original>
    <variation>P</variation>
    <location>
        <position position="272"/>
    </location>
</feature>
<feature type="sequence conflict" description="In Ref. 4; CAH18700." evidence="7" ref="4">
    <original>S</original>
    <variation>L</variation>
    <location>
        <position position="316"/>
    </location>
</feature>
<feature type="sequence conflict" description="In Ref. 4; CAH56220." evidence="7" ref="4">
    <original>T</original>
    <variation>P</variation>
    <location>
        <position position="355"/>
    </location>
</feature>
<feature type="sequence conflict" description="In Ref. 4; CAH56220." evidence="7" ref="4">
    <original>T</original>
    <variation>S</variation>
    <location>
        <position position="621"/>
    </location>
</feature>
<feature type="sequence conflict" description="In Ref. 4; CAH18700." evidence="7" ref="4">
    <original>T</original>
    <variation>A</variation>
    <location>
        <position position="753"/>
    </location>
</feature>
<feature type="sequence conflict" description="In Ref. 3; BAB13948." evidence="7" ref="3">
    <original>W</original>
    <variation>R</variation>
    <location>
        <position position="906"/>
    </location>
</feature>
<feature type="sequence conflict" description="In Ref. 4; CAH56197." evidence="7" ref="4">
    <original>P</original>
    <variation>S</variation>
    <location>
        <position position="947"/>
    </location>
</feature>
<evidence type="ECO:0000250" key="1">
    <source>
        <dbReference type="UniProtKB" id="Q3UZ18"/>
    </source>
</evidence>
<evidence type="ECO:0000256" key="2">
    <source>
        <dbReference type="SAM" id="MobiDB-lite"/>
    </source>
</evidence>
<evidence type="ECO:0000269" key="3">
    <source>
    </source>
</evidence>
<evidence type="ECO:0000269" key="4">
    <source>
    </source>
</evidence>
<evidence type="ECO:0000269" key="5">
    <source>
    </source>
</evidence>
<evidence type="ECO:0000303" key="6">
    <source>
    </source>
</evidence>
<evidence type="ECO:0000305" key="7"/>
<evidence type="ECO:0007744" key="8">
    <source>
    </source>
</evidence>
<proteinExistence type="evidence at protein level"/>